<dbReference type="EMBL" id="BC061995">
    <property type="protein sequence ID" value="AAH61995.1"/>
    <property type="molecule type" value="mRNA"/>
</dbReference>
<dbReference type="RefSeq" id="NP_001009534.1">
    <property type="nucleotide sequence ID" value="NM_001009534.1"/>
</dbReference>
<dbReference type="SMR" id="Q6P6V7"/>
<dbReference type="STRING" id="10116.ENSRNOP00000056152"/>
<dbReference type="MEROPS" id="M98.A03"/>
<dbReference type="GlyGen" id="Q6P6V7">
    <property type="glycosylation" value="1 site"/>
</dbReference>
<dbReference type="PaxDb" id="10116-ENSRNOP00000056152"/>
<dbReference type="GeneID" id="494321"/>
<dbReference type="KEGG" id="rno:494321"/>
<dbReference type="UCSC" id="RGD:1359405">
    <property type="organism name" value="rat"/>
</dbReference>
<dbReference type="AGR" id="RGD:1359405"/>
<dbReference type="CTD" id="494321"/>
<dbReference type="RGD" id="1359405">
    <property type="gene designation" value="Fam115e"/>
</dbReference>
<dbReference type="eggNOG" id="ENOG502QQUS">
    <property type="taxonomic scope" value="Eukaryota"/>
</dbReference>
<dbReference type="InParanoid" id="Q6P6V7"/>
<dbReference type="OrthoDB" id="10260387at2759"/>
<dbReference type="PhylomeDB" id="Q6P6V7"/>
<dbReference type="PRO" id="PR:Q6P6V7"/>
<dbReference type="Proteomes" id="UP000002494">
    <property type="component" value="Unplaced"/>
</dbReference>
<dbReference type="GO" id="GO:0005886">
    <property type="term" value="C:plasma membrane"/>
    <property type="evidence" value="ECO:0000318"/>
    <property type="project" value="GO_Central"/>
</dbReference>
<dbReference type="GO" id="GO:0044325">
    <property type="term" value="F:transmembrane transporter binding"/>
    <property type="evidence" value="ECO:0000318"/>
    <property type="project" value="GO_Central"/>
</dbReference>
<dbReference type="FunFam" id="1.10.390.30:FF:000001">
    <property type="entry name" value="TRPM8 channel-associated factor 1"/>
    <property type="match status" value="1"/>
</dbReference>
<dbReference type="FunFam" id="3.40.390.80:FF:000001">
    <property type="entry name" value="TRPM8 channel-associated factor 1"/>
    <property type="match status" value="1"/>
</dbReference>
<dbReference type="FunFam" id="2.60.120.1250:FF:000001">
    <property type="entry name" value="TRPM8 channel-associated factor 3"/>
    <property type="match status" value="1"/>
</dbReference>
<dbReference type="Gene3D" id="2.60.120.1250">
    <property type="entry name" value="Peptidase M60, enhancin-like domain 1"/>
    <property type="match status" value="1"/>
</dbReference>
<dbReference type="Gene3D" id="3.40.390.80">
    <property type="entry name" value="Peptidase M60, enhancin-like domain 2"/>
    <property type="match status" value="1"/>
</dbReference>
<dbReference type="Gene3D" id="1.10.390.30">
    <property type="entry name" value="Peptidase M60, enhancin-like domain 3"/>
    <property type="match status" value="1"/>
</dbReference>
<dbReference type="InterPro" id="IPR029062">
    <property type="entry name" value="Class_I_gatase-like"/>
</dbReference>
<dbReference type="InterPro" id="IPR035423">
    <property type="entry name" value="M60-like_N"/>
</dbReference>
<dbReference type="InterPro" id="IPR042279">
    <property type="entry name" value="Pep_M60_3"/>
</dbReference>
<dbReference type="InterPro" id="IPR031161">
    <property type="entry name" value="Peptidase_M60_dom"/>
</dbReference>
<dbReference type="InterPro" id="IPR051244">
    <property type="entry name" value="TCAF"/>
</dbReference>
<dbReference type="PANTHER" id="PTHR15730">
    <property type="entry name" value="EXPERIMENTAL AUTOIMMUNE PROSTATITIS ANTIGEN 2-RELATED"/>
    <property type="match status" value="1"/>
</dbReference>
<dbReference type="PANTHER" id="PTHR15730:SF3">
    <property type="entry name" value="TRPM8 CHANNEL-ASSOCIATED FACTOR 3"/>
    <property type="match status" value="1"/>
</dbReference>
<dbReference type="Pfam" id="PF17291">
    <property type="entry name" value="M60-like_N"/>
    <property type="match status" value="1"/>
</dbReference>
<dbReference type="Pfam" id="PF13402">
    <property type="entry name" value="Peptidase_M60"/>
    <property type="match status" value="1"/>
</dbReference>
<dbReference type="SMART" id="SM01276">
    <property type="entry name" value="M60-like"/>
    <property type="match status" value="1"/>
</dbReference>
<dbReference type="SUPFAM" id="SSF52317">
    <property type="entry name" value="Class I glutamine amidotransferase-like"/>
    <property type="match status" value="1"/>
</dbReference>
<dbReference type="PROSITE" id="PS51723">
    <property type="entry name" value="PEPTIDASE_M60"/>
    <property type="match status" value="1"/>
</dbReference>
<feature type="chain" id="PRO_0000320192" description="TRPM8 channel-associated factor 3">
    <location>
        <begin position="1"/>
        <end position="914"/>
    </location>
</feature>
<feature type="domain" description="Peptidase M60" evidence="3">
    <location>
        <begin position="533"/>
        <end position="832"/>
    </location>
</feature>
<organism>
    <name type="scientific">Rattus norvegicus</name>
    <name type="common">Rat</name>
    <dbReference type="NCBI Taxonomy" id="10116"/>
    <lineage>
        <taxon>Eukaryota</taxon>
        <taxon>Metazoa</taxon>
        <taxon>Chordata</taxon>
        <taxon>Craniata</taxon>
        <taxon>Vertebrata</taxon>
        <taxon>Euteleostomi</taxon>
        <taxon>Mammalia</taxon>
        <taxon>Eutheria</taxon>
        <taxon>Euarchontoglires</taxon>
        <taxon>Glires</taxon>
        <taxon>Rodentia</taxon>
        <taxon>Myomorpha</taxon>
        <taxon>Muroidea</taxon>
        <taxon>Muridae</taxon>
        <taxon>Murinae</taxon>
        <taxon>Rattus</taxon>
    </lineage>
</organism>
<reference key="1">
    <citation type="journal article" date="2004" name="Genome Res.">
        <title>The status, quality, and expansion of the NIH full-length cDNA project: the Mammalian Gene Collection (MGC).</title>
        <authorList>
            <consortium name="The MGC Project Team"/>
        </authorList>
    </citation>
    <scope>NUCLEOTIDE SEQUENCE [LARGE SCALE MRNA]</scope>
    <source>
        <tissue>Prostate</tissue>
    </source>
</reference>
<keyword id="KW-1185">Reference proteome</keyword>
<comment type="function">
    <text evidence="1 2">May play a role in the regulation of the cation channel TRPM8 activity.</text>
</comment>
<comment type="similarity">
    <text evidence="4">Belongs to the TCAF family.</text>
</comment>
<evidence type="ECO:0000250" key="1">
    <source>
        <dbReference type="UniProtKB" id="A6NFQ2"/>
    </source>
</evidence>
<evidence type="ECO:0000250" key="2">
    <source>
        <dbReference type="UniProtKB" id="Q9Y4C2"/>
    </source>
</evidence>
<evidence type="ECO:0000255" key="3">
    <source>
        <dbReference type="PROSITE-ProRule" id="PRU01060"/>
    </source>
</evidence>
<evidence type="ECO:0000305" key="4"/>
<sequence length="914" mass="102094">MATTPDAAFEALMNGVTSWNLPKEPTPSELLLTGEAAFPVMVNDKDQVLIAASFYGHGRLVVLSHESYLLHAGLAPFLLNAVSWLCPSPEAPIAVHSSLASLVKILGDSGVNAVVQPEPREALGVYCIDAYSETLTETLIRFMKNGGGLLIGGQALTWAVHHGHEKVLSSFPGNQVTSVAGVYFTDISGNRDWFKVSKEIPNLTLYVQCEDELKYDQQQLLKGMSEMDIETGPVPSQLLVHGQRAFPLGVDNSFNCFLAAARFGRGRVVLAGHESLILNQTMLPFVLNALRWLMGNQTGRIGLASEMKALKSVLPNSSFEWSETELLTNDLSVFCSCSLGKTDPKKVEEFVAEGGGLLIGAEAWMWGRRNPDSNCMTQYPNNIILKRFGVGIISQVVQRGRFPVPNPEVINYHIRRALSQYESVIHSQGSSLQEGWLNKLSQDCFYMFQMTHQRISIYDSVKEHALKMIQSQGFPSVTEQHPITKGSSQAFLLSLAYELFKSGVDRSQLLPPPTLLSPTESPMTIKISTGNDNSWVSTGLYLPEGQVAQVTLPTEATHAKLKVLIGCHIDNISQAKTYIRPPVMTYVYHLTSSQTSISWLYGGLLYIMVPDKYNQDNVSVTISGAVSAPYFRLGKTTQEEWKNLIEHSKAPWGELATDNIILTIPTVNLKVLQDPYPLLQLWDKIVKAVAKLAARPFPFQRPERIVLDKQISFGFLHSGYPIMGLIIIVEGIINEFKIRSHGVWGVTHELGHNHQKPGWTFRPHTTEALCNLWSIYVHETVLNIPRDQAHPSLNPELRKQRIKDHLNKGAPLSNWIVWTALETYLQLQEGFGWEPFIQLFANYQTLTGLPQNNEDKMNLWVKKFSEVVQKNLAPFFKAWGWPVQHAVAKSLASLPEWQENPMKMYTAESTEHTE</sequence>
<protein>
    <recommendedName>
        <fullName evidence="4">TRPM8 channel-associated factor 3</fullName>
    </recommendedName>
    <alternativeName>
        <fullName>Experimental autoimmune prostatitis antigen 2 homolog</fullName>
    </alternativeName>
</protein>
<gene>
    <name evidence="4" type="primary">Tcaf3</name>
    <name type="synonym">Eapa2</name>
    <name type="synonym">Fam115e</name>
</gene>
<accession>Q6P6V7</accession>
<proteinExistence type="evidence at transcript level"/>
<name>TCAF3_RAT</name>